<dbReference type="EC" id="6.3.4.4" evidence="1"/>
<dbReference type="EMBL" id="CP000387">
    <property type="protein sequence ID" value="ABN45550.1"/>
    <property type="molecule type" value="Genomic_DNA"/>
</dbReference>
<dbReference type="RefSeq" id="WP_011837602.1">
    <property type="nucleotide sequence ID" value="NC_009009.1"/>
</dbReference>
<dbReference type="RefSeq" id="YP_001036100.1">
    <property type="nucleotide sequence ID" value="NC_009009.1"/>
</dbReference>
<dbReference type="SMR" id="A3CQU5"/>
<dbReference type="STRING" id="388919.SSA_2185"/>
<dbReference type="KEGG" id="ssa:SSA_2185"/>
<dbReference type="PATRIC" id="fig|388919.9.peg.2070"/>
<dbReference type="eggNOG" id="COG0104">
    <property type="taxonomic scope" value="Bacteria"/>
</dbReference>
<dbReference type="HOGENOM" id="CLU_029848_0_0_9"/>
<dbReference type="OrthoDB" id="9807553at2"/>
<dbReference type="UniPathway" id="UPA00075">
    <property type="reaction ID" value="UER00335"/>
</dbReference>
<dbReference type="Proteomes" id="UP000002148">
    <property type="component" value="Chromosome"/>
</dbReference>
<dbReference type="GO" id="GO:0005737">
    <property type="term" value="C:cytoplasm"/>
    <property type="evidence" value="ECO:0007669"/>
    <property type="project" value="UniProtKB-SubCell"/>
</dbReference>
<dbReference type="GO" id="GO:0004019">
    <property type="term" value="F:adenylosuccinate synthase activity"/>
    <property type="evidence" value="ECO:0007669"/>
    <property type="project" value="UniProtKB-UniRule"/>
</dbReference>
<dbReference type="GO" id="GO:0005525">
    <property type="term" value="F:GTP binding"/>
    <property type="evidence" value="ECO:0007669"/>
    <property type="project" value="UniProtKB-UniRule"/>
</dbReference>
<dbReference type="GO" id="GO:0000287">
    <property type="term" value="F:magnesium ion binding"/>
    <property type="evidence" value="ECO:0007669"/>
    <property type="project" value="UniProtKB-UniRule"/>
</dbReference>
<dbReference type="GO" id="GO:0044208">
    <property type="term" value="P:'de novo' AMP biosynthetic process"/>
    <property type="evidence" value="ECO:0007669"/>
    <property type="project" value="UniProtKB-UniRule"/>
</dbReference>
<dbReference type="GO" id="GO:0046040">
    <property type="term" value="P:IMP metabolic process"/>
    <property type="evidence" value="ECO:0007669"/>
    <property type="project" value="TreeGrafter"/>
</dbReference>
<dbReference type="CDD" id="cd03108">
    <property type="entry name" value="AdSS"/>
    <property type="match status" value="1"/>
</dbReference>
<dbReference type="FunFam" id="1.10.300.10:FF:000001">
    <property type="entry name" value="Adenylosuccinate synthetase"/>
    <property type="match status" value="1"/>
</dbReference>
<dbReference type="FunFam" id="3.90.170.10:FF:000001">
    <property type="entry name" value="Adenylosuccinate synthetase"/>
    <property type="match status" value="1"/>
</dbReference>
<dbReference type="Gene3D" id="3.40.440.10">
    <property type="entry name" value="Adenylosuccinate Synthetase, subunit A, domain 1"/>
    <property type="match status" value="1"/>
</dbReference>
<dbReference type="Gene3D" id="1.10.300.10">
    <property type="entry name" value="Adenylosuccinate Synthetase, subunit A, domain 2"/>
    <property type="match status" value="1"/>
</dbReference>
<dbReference type="Gene3D" id="3.90.170.10">
    <property type="entry name" value="Adenylosuccinate Synthetase, subunit A, domain 3"/>
    <property type="match status" value="1"/>
</dbReference>
<dbReference type="HAMAP" id="MF_00011">
    <property type="entry name" value="Adenylosucc_synth"/>
    <property type="match status" value="1"/>
</dbReference>
<dbReference type="InterPro" id="IPR018220">
    <property type="entry name" value="Adenylosuccin_syn_GTP-bd"/>
</dbReference>
<dbReference type="InterPro" id="IPR033128">
    <property type="entry name" value="Adenylosuccin_syn_Lys_AS"/>
</dbReference>
<dbReference type="InterPro" id="IPR042109">
    <property type="entry name" value="Adenylosuccinate_synth_dom1"/>
</dbReference>
<dbReference type="InterPro" id="IPR042110">
    <property type="entry name" value="Adenylosuccinate_synth_dom2"/>
</dbReference>
<dbReference type="InterPro" id="IPR042111">
    <property type="entry name" value="Adenylosuccinate_synth_dom3"/>
</dbReference>
<dbReference type="InterPro" id="IPR001114">
    <property type="entry name" value="Adenylosuccinate_synthetase"/>
</dbReference>
<dbReference type="InterPro" id="IPR027417">
    <property type="entry name" value="P-loop_NTPase"/>
</dbReference>
<dbReference type="NCBIfam" id="NF002223">
    <property type="entry name" value="PRK01117.1"/>
    <property type="match status" value="1"/>
</dbReference>
<dbReference type="NCBIfam" id="TIGR00184">
    <property type="entry name" value="purA"/>
    <property type="match status" value="1"/>
</dbReference>
<dbReference type="PANTHER" id="PTHR11846">
    <property type="entry name" value="ADENYLOSUCCINATE SYNTHETASE"/>
    <property type="match status" value="1"/>
</dbReference>
<dbReference type="PANTHER" id="PTHR11846:SF0">
    <property type="entry name" value="ADENYLOSUCCINATE SYNTHETASE"/>
    <property type="match status" value="1"/>
</dbReference>
<dbReference type="Pfam" id="PF00709">
    <property type="entry name" value="Adenylsucc_synt"/>
    <property type="match status" value="1"/>
</dbReference>
<dbReference type="SMART" id="SM00788">
    <property type="entry name" value="Adenylsucc_synt"/>
    <property type="match status" value="1"/>
</dbReference>
<dbReference type="SUPFAM" id="SSF52540">
    <property type="entry name" value="P-loop containing nucleoside triphosphate hydrolases"/>
    <property type="match status" value="1"/>
</dbReference>
<dbReference type="PROSITE" id="PS01266">
    <property type="entry name" value="ADENYLOSUCCIN_SYN_1"/>
    <property type="match status" value="1"/>
</dbReference>
<dbReference type="PROSITE" id="PS00513">
    <property type="entry name" value="ADENYLOSUCCIN_SYN_2"/>
    <property type="match status" value="1"/>
</dbReference>
<proteinExistence type="inferred from homology"/>
<sequence>MTSVVVVGTQWGDEGKGKITDFLSANAEVIARYQGGDNAGHTIVIDGKKYKLHLIPSGIFFPEKISVIGNGMVVNPKSLVKELNYLHEEGVTTDNLRISDRAHVILPYHIELDRLQEEAKGDNKIGTTIKGIGPAYMDKAARVGIRIADLLDKDIFRERLERNLTEKNRLFEKLYDSTAISFDDIFEEYYEYGQQIKQYVTDTSVILNDALDQGKRVLFEGAQGVMLDIDQGTYPFVTSSNPVAGGVTIGSGVGPSKIDKVVGVCKAYTSRVGDGPFPTELFDEVGNRIRDIGHEYGTTTGRPRRVGWFDSVVMRHSRRVSGITNLSLNSIDVLSGLDTVKICVAYDLDGQRIDHYPASLEQLKRCKPIYEELPGWPEDITGVRSLEDLPENARNYVRRVSELVGVRISTFSVGPGREQTNILESVWSNL</sequence>
<name>PURA_STRSV</name>
<keyword id="KW-0963">Cytoplasm</keyword>
<keyword id="KW-0342">GTP-binding</keyword>
<keyword id="KW-0436">Ligase</keyword>
<keyword id="KW-0460">Magnesium</keyword>
<keyword id="KW-0479">Metal-binding</keyword>
<keyword id="KW-0547">Nucleotide-binding</keyword>
<keyword id="KW-0658">Purine biosynthesis</keyword>
<keyword id="KW-1185">Reference proteome</keyword>
<feature type="chain" id="PRO_1000000931" description="Adenylosuccinate synthetase">
    <location>
        <begin position="1"/>
        <end position="430"/>
    </location>
</feature>
<feature type="active site" description="Proton acceptor" evidence="1">
    <location>
        <position position="13"/>
    </location>
</feature>
<feature type="active site" description="Proton donor" evidence="1">
    <location>
        <position position="41"/>
    </location>
</feature>
<feature type="binding site" evidence="1">
    <location>
        <begin position="12"/>
        <end position="18"/>
    </location>
    <ligand>
        <name>GTP</name>
        <dbReference type="ChEBI" id="CHEBI:37565"/>
    </ligand>
</feature>
<feature type="binding site" description="in other chain" evidence="1">
    <location>
        <begin position="13"/>
        <end position="16"/>
    </location>
    <ligand>
        <name>IMP</name>
        <dbReference type="ChEBI" id="CHEBI:58053"/>
        <note>ligand shared between dimeric partners</note>
    </ligand>
</feature>
<feature type="binding site" evidence="1">
    <location>
        <position position="13"/>
    </location>
    <ligand>
        <name>Mg(2+)</name>
        <dbReference type="ChEBI" id="CHEBI:18420"/>
    </ligand>
</feature>
<feature type="binding site" description="in other chain" evidence="1">
    <location>
        <begin position="38"/>
        <end position="41"/>
    </location>
    <ligand>
        <name>IMP</name>
        <dbReference type="ChEBI" id="CHEBI:58053"/>
        <note>ligand shared between dimeric partners</note>
    </ligand>
</feature>
<feature type="binding site" evidence="1">
    <location>
        <begin position="40"/>
        <end position="42"/>
    </location>
    <ligand>
        <name>GTP</name>
        <dbReference type="ChEBI" id="CHEBI:37565"/>
    </ligand>
</feature>
<feature type="binding site" evidence="1">
    <location>
        <position position="40"/>
    </location>
    <ligand>
        <name>Mg(2+)</name>
        <dbReference type="ChEBI" id="CHEBI:18420"/>
    </ligand>
</feature>
<feature type="binding site" description="in other chain" evidence="1">
    <location>
        <position position="128"/>
    </location>
    <ligand>
        <name>IMP</name>
        <dbReference type="ChEBI" id="CHEBI:58053"/>
        <note>ligand shared between dimeric partners</note>
    </ligand>
</feature>
<feature type="binding site" evidence="1">
    <location>
        <position position="142"/>
    </location>
    <ligand>
        <name>IMP</name>
        <dbReference type="ChEBI" id="CHEBI:58053"/>
        <note>ligand shared between dimeric partners</note>
    </ligand>
</feature>
<feature type="binding site" description="in other chain" evidence="1">
    <location>
        <position position="223"/>
    </location>
    <ligand>
        <name>IMP</name>
        <dbReference type="ChEBI" id="CHEBI:58053"/>
        <note>ligand shared between dimeric partners</note>
    </ligand>
</feature>
<feature type="binding site" description="in other chain" evidence="1">
    <location>
        <position position="238"/>
    </location>
    <ligand>
        <name>IMP</name>
        <dbReference type="ChEBI" id="CHEBI:58053"/>
        <note>ligand shared between dimeric partners</note>
    </ligand>
</feature>
<feature type="binding site" evidence="1">
    <location>
        <begin position="298"/>
        <end position="304"/>
    </location>
    <ligand>
        <name>substrate</name>
    </ligand>
</feature>
<feature type="binding site" description="in other chain" evidence="1">
    <location>
        <position position="302"/>
    </location>
    <ligand>
        <name>IMP</name>
        <dbReference type="ChEBI" id="CHEBI:58053"/>
        <note>ligand shared between dimeric partners</note>
    </ligand>
</feature>
<feature type="binding site" evidence="1">
    <location>
        <position position="304"/>
    </location>
    <ligand>
        <name>GTP</name>
        <dbReference type="ChEBI" id="CHEBI:37565"/>
    </ligand>
</feature>
<feature type="binding site" evidence="1">
    <location>
        <begin position="330"/>
        <end position="332"/>
    </location>
    <ligand>
        <name>GTP</name>
        <dbReference type="ChEBI" id="CHEBI:37565"/>
    </ligand>
</feature>
<feature type="binding site" evidence="1">
    <location>
        <begin position="412"/>
        <end position="414"/>
    </location>
    <ligand>
        <name>GTP</name>
        <dbReference type="ChEBI" id="CHEBI:37565"/>
    </ligand>
</feature>
<reference key="1">
    <citation type="journal article" date="2007" name="J. Bacteriol.">
        <title>Genome of the opportunistic pathogen Streptococcus sanguinis.</title>
        <authorList>
            <person name="Xu P."/>
            <person name="Alves J.M."/>
            <person name="Kitten T."/>
            <person name="Brown A."/>
            <person name="Chen Z."/>
            <person name="Ozaki L.S."/>
            <person name="Manque P."/>
            <person name="Ge X."/>
            <person name="Serrano M.G."/>
            <person name="Puiu D."/>
            <person name="Hendricks S."/>
            <person name="Wang Y."/>
            <person name="Chaplin M.D."/>
            <person name="Akan D."/>
            <person name="Paik S."/>
            <person name="Peterson D.L."/>
            <person name="Macrina F.L."/>
            <person name="Buck G.A."/>
        </authorList>
    </citation>
    <scope>NUCLEOTIDE SEQUENCE [LARGE SCALE GENOMIC DNA]</scope>
    <source>
        <strain>SK36</strain>
    </source>
</reference>
<gene>
    <name evidence="1" type="primary">purA</name>
    <name type="ordered locus">SSA_2185</name>
</gene>
<evidence type="ECO:0000255" key="1">
    <source>
        <dbReference type="HAMAP-Rule" id="MF_00011"/>
    </source>
</evidence>
<organism>
    <name type="scientific">Streptococcus sanguinis (strain SK36)</name>
    <dbReference type="NCBI Taxonomy" id="388919"/>
    <lineage>
        <taxon>Bacteria</taxon>
        <taxon>Bacillati</taxon>
        <taxon>Bacillota</taxon>
        <taxon>Bacilli</taxon>
        <taxon>Lactobacillales</taxon>
        <taxon>Streptococcaceae</taxon>
        <taxon>Streptococcus</taxon>
    </lineage>
</organism>
<accession>A3CQU5</accession>
<protein>
    <recommendedName>
        <fullName evidence="1">Adenylosuccinate synthetase</fullName>
        <shortName evidence="1">AMPSase</shortName>
        <shortName evidence="1">AdSS</shortName>
        <ecNumber evidence="1">6.3.4.4</ecNumber>
    </recommendedName>
    <alternativeName>
        <fullName evidence="1">IMP--aspartate ligase</fullName>
    </alternativeName>
</protein>
<comment type="function">
    <text evidence="1">Plays an important role in the de novo pathway of purine nucleotide biosynthesis. Catalyzes the first committed step in the biosynthesis of AMP from IMP.</text>
</comment>
<comment type="catalytic activity">
    <reaction evidence="1">
        <text>IMP + L-aspartate + GTP = N(6)-(1,2-dicarboxyethyl)-AMP + GDP + phosphate + 2 H(+)</text>
        <dbReference type="Rhea" id="RHEA:15753"/>
        <dbReference type="ChEBI" id="CHEBI:15378"/>
        <dbReference type="ChEBI" id="CHEBI:29991"/>
        <dbReference type="ChEBI" id="CHEBI:37565"/>
        <dbReference type="ChEBI" id="CHEBI:43474"/>
        <dbReference type="ChEBI" id="CHEBI:57567"/>
        <dbReference type="ChEBI" id="CHEBI:58053"/>
        <dbReference type="ChEBI" id="CHEBI:58189"/>
        <dbReference type="EC" id="6.3.4.4"/>
    </reaction>
</comment>
<comment type="cofactor">
    <cofactor evidence="1">
        <name>Mg(2+)</name>
        <dbReference type="ChEBI" id="CHEBI:18420"/>
    </cofactor>
    <text evidence="1">Binds 1 Mg(2+) ion per subunit.</text>
</comment>
<comment type="pathway">
    <text evidence="1">Purine metabolism; AMP biosynthesis via de novo pathway; AMP from IMP: step 1/2.</text>
</comment>
<comment type="subunit">
    <text evidence="1">Homodimer.</text>
</comment>
<comment type="subcellular location">
    <subcellularLocation>
        <location evidence="1">Cytoplasm</location>
    </subcellularLocation>
</comment>
<comment type="similarity">
    <text evidence="1">Belongs to the adenylosuccinate synthetase family.</text>
</comment>